<name>ENO_MESCR</name>
<sequence>MVTIKCVKARQIYDSRGNPTVEADIHLDDGTYARAAVPSGASTGVYEALELRDGGKDYMGKGVYKAVKNVNEIIGPALVGKDPTQQTAIDNFMVQQLDGTVNEWGWCKQKLGANAILAVSLAVCKAGAQVKKIPLYQHIAEIAGNKNMVLPVPAFNVINGGSHAGNKLAMQEFMILPTGASSFKEAMKMGSEVYHNLKSVIKKKYGQDATNVGDEGGFAPNIQENKEGLELLKTAIEKAGYTGKVVIGMDVAASEFYKEDKSYDLNFKEENNDGSQRISGEALKDLYKSFVAEYPIVSIEDPFDQDDWEHYAKMTAECGEKVQIVGDDLLVTNPKRVKKAIDENPCNALLLKVNQIGSVTESIEAVKMSKKAGWGVMASHRSGETEDTFIADLSVGLSTGQIKTGAPCRSERLAKYNQLLRIEEELGDKAVYAGANFRRPVEPY</sequence>
<keyword id="KW-0963">Cytoplasm</keyword>
<keyword id="KW-0324">Glycolysis</keyword>
<keyword id="KW-0456">Lyase</keyword>
<keyword id="KW-0460">Magnesium</keyword>
<keyword id="KW-0479">Metal-binding</keyword>
<evidence type="ECO:0000250" key="1"/>
<evidence type="ECO:0000305" key="2"/>
<reference key="1">
    <citation type="journal article" date="1995" name="Plant Physiol.">
        <title>Posttranscriptional and posttranslational control of enolase expression in the facultative Crassulacean acid metabolism plant Mesembryanthemum crystallinum L.</title>
        <authorList>
            <person name="Forsthoefel N.R."/>
            <person name="Cushman M.A."/>
            <person name="Cushman J.C."/>
        </authorList>
    </citation>
    <scope>NUCLEOTIDE SEQUENCE [MRNA]</scope>
</reference>
<protein>
    <recommendedName>
        <fullName>Enolase</fullName>
        <ecNumber>4.2.1.11</ecNumber>
    </recommendedName>
    <alternativeName>
        <fullName>2-phospho-D-glycerate hydro-lyase</fullName>
    </alternativeName>
    <alternativeName>
        <fullName>2-phosphoglycerate dehydratase</fullName>
    </alternativeName>
</protein>
<organism>
    <name type="scientific">Mesembryanthemum crystallinum</name>
    <name type="common">Common ice plant</name>
    <name type="synonym">Cryophytum crystallinum</name>
    <dbReference type="NCBI Taxonomy" id="3544"/>
    <lineage>
        <taxon>Eukaryota</taxon>
        <taxon>Viridiplantae</taxon>
        <taxon>Streptophyta</taxon>
        <taxon>Embryophyta</taxon>
        <taxon>Tracheophyta</taxon>
        <taxon>Spermatophyta</taxon>
        <taxon>Magnoliopsida</taxon>
        <taxon>eudicotyledons</taxon>
        <taxon>Gunneridae</taxon>
        <taxon>Pentapetalae</taxon>
        <taxon>Caryophyllales</taxon>
        <taxon>Aizoaceae</taxon>
        <taxon>Mesembryanthemum</taxon>
        <taxon>Mesembryanthemum subgen. Cryophytum</taxon>
    </lineage>
</organism>
<dbReference type="EC" id="4.2.1.11"/>
<dbReference type="EMBL" id="S79242">
    <property type="protein sequence ID" value="AAB34986.1"/>
    <property type="molecule type" value="mRNA"/>
</dbReference>
<dbReference type="EMBL" id="U09194">
    <property type="protein sequence ID" value="AAA21277.1"/>
    <property type="molecule type" value="mRNA"/>
</dbReference>
<dbReference type="PIR" id="T12341">
    <property type="entry name" value="T12341"/>
</dbReference>
<dbReference type="SMR" id="Q43130"/>
<dbReference type="UniPathway" id="UPA00109">
    <property type="reaction ID" value="UER00187"/>
</dbReference>
<dbReference type="GO" id="GO:0000015">
    <property type="term" value="C:phosphopyruvate hydratase complex"/>
    <property type="evidence" value="ECO:0007669"/>
    <property type="project" value="InterPro"/>
</dbReference>
<dbReference type="GO" id="GO:0000287">
    <property type="term" value="F:magnesium ion binding"/>
    <property type="evidence" value="ECO:0007669"/>
    <property type="project" value="InterPro"/>
</dbReference>
<dbReference type="GO" id="GO:0004634">
    <property type="term" value="F:phosphopyruvate hydratase activity"/>
    <property type="evidence" value="ECO:0007669"/>
    <property type="project" value="UniProtKB-EC"/>
</dbReference>
<dbReference type="GO" id="GO:0006096">
    <property type="term" value="P:glycolytic process"/>
    <property type="evidence" value="ECO:0007669"/>
    <property type="project" value="UniProtKB-UniPathway"/>
</dbReference>
<dbReference type="CDD" id="cd03313">
    <property type="entry name" value="enolase"/>
    <property type="match status" value="1"/>
</dbReference>
<dbReference type="FunFam" id="3.30.390.10:FF:000001">
    <property type="entry name" value="Enolase"/>
    <property type="match status" value="1"/>
</dbReference>
<dbReference type="FunFam" id="3.20.20.120:FF:000002">
    <property type="entry name" value="Enolase 1"/>
    <property type="match status" value="1"/>
</dbReference>
<dbReference type="Gene3D" id="3.20.20.120">
    <property type="entry name" value="Enolase-like C-terminal domain"/>
    <property type="match status" value="1"/>
</dbReference>
<dbReference type="Gene3D" id="3.30.390.10">
    <property type="entry name" value="Enolase-like, N-terminal domain"/>
    <property type="match status" value="1"/>
</dbReference>
<dbReference type="HAMAP" id="MF_00318">
    <property type="entry name" value="Enolase"/>
    <property type="match status" value="1"/>
</dbReference>
<dbReference type="InterPro" id="IPR000941">
    <property type="entry name" value="Enolase"/>
</dbReference>
<dbReference type="InterPro" id="IPR036849">
    <property type="entry name" value="Enolase-like_C_sf"/>
</dbReference>
<dbReference type="InterPro" id="IPR029017">
    <property type="entry name" value="Enolase-like_N"/>
</dbReference>
<dbReference type="InterPro" id="IPR020810">
    <property type="entry name" value="Enolase_C"/>
</dbReference>
<dbReference type="InterPro" id="IPR020809">
    <property type="entry name" value="Enolase_CS"/>
</dbReference>
<dbReference type="InterPro" id="IPR020811">
    <property type="entry name" value="Enolase_N"/>
</dbReference>
<dbReference type="NCBIfam" id="TIGR01060">
    <property type="entry name" value="eno"/>
    <property type="match status" value="1"/>
</dbReference>
<dbReference type="PANTHER" id="PTHR11902">
    <property type="entry name" value="ENOLASE"/>
    <property type="match status" value="1"/>
</dbReference>
<dbReference type="PANTHER" id="PTHR11902:SF46">
    <property type="entry name" value="ENOLASE 2"/>
    <property type="match status" value="1"/>
</dbReference>
<dbReference type="Pfam" id="PF00113">
    <property type="entry name" value="Enolase_C"/>
    <property type="match status" value="1"/>
</dbReference>
<dbReference type="Pfam" id="PF03952">
    <property type="entry name" value="Enolase_N"/>
    <property type="match status" value="1"/>
</dbReference>
<dbReference type="PIRSF" id="PIRSF001400">
    <property type="entry name" value="Enolase"/>
    <property type="match status" value="1"/>
</dbReference>
<dbReference type="PRINTS" id="PR00148">
    <property type="entry name" value="ENOLASE"/>
</dbReference>
<dbReference type="SFLD" id="SFLDS00001">
    <property type="entry name" value="Enolase"/>
    <property type="match status" value="1"/>
</dbReference>
<dbReference type="SFLD" id="SFLDF00002">
    <property type="entry name" value="enolase"/>
    <property type="match status" value="1"/>
</dbReference>
<dbReference type="SMART" id="SM01192">
    <property type="entry name" value="Enolase_C"/>
    <property type="match status" value="1"/>
</dbReference>
<dbReference type="SMART" id="SM01193">
    <property type="entry name" value="Enolase_N"/>
    <property type="match status" value="1"/>
</dbReference>
<dbReference type="SUPFAM" id="SSF51604">
    <property type="entry name" value="Enolase C-terminal domain-like"/>
    <property type="match status" value="1"/>
</dbReference>
<dbReference type="SUPFAM" id="SSF54826">
    <property type="entry name" value="Enolase N-terminal domain-like"/>
    <property type="match status" value="1"/>
</dbReference>
<dbReference type="PROSITE" id="PS00164">
    <property type="entry name" value="ENOLASE"/>
    <property type="match status" value="1"/>
</dbReference>
<accession>Q43130</accession>
<accession>Q42907</accession>
<gene>
    <name type="primary">PGH1</name>
    <name type="synonym">PGH1B</name>
</gene>
<comment type="catalytic activity">
    <reaction>
        <text>(2R)-2-phosphoglycerate = phosphoenolpyruvate + H2O</text>
        <dbReference type="Rhea" id="RHEA:10164"/>
        <dbReference type="ChEBI" id="CHEBI:15377"/>
        <dbReference type="ChEBI" id="CHEBI:58289"/>
        <dbReference type="ChEBI" id="CHEBI:58702"/>
        <dbReference type="EC" id="4.2.1.11"/>
    </reaction>
</comment>
<comment type="cofactor">
    <cofactor evidence="1">
        <name>Mg(2+)</name>
        <dbReference type="ChEBI" id="CHEBI:18420"/>
    </cofactor>
    <text evidence="1">Mg(2+) is required for catalysis and for stabilizing the dimer.</text>
</comment>
<comment type="pathway">
    <text>Carbohydrate degradation; glycolysis; pyruvate from D-glyceraldehyde 3-phosphate: step 4/5.</text>
</comment>
<comment type="subunit">
    <text evidence="1">Homodimer.</text>
</comment>
<comment type="subcellular location">
    <subcellularLocation>
        <location evidence="1">Cytoplasm</location>
    </subcellularLocation>
</comment>
<comment type="similarity">
    <text evidence="2">Belongs to the enolase family.</text>
</comment>
<proteinExistence type="evidence at transcript level"/>
<feature type="chain" id="PRO_0000134075" description="Enolase">
    <location>
        <begin position="1"/>
        <end position="444"/>
    </location>
</feature>
<feature type="active site" description="Proton donor" evidence="1">
    <location>
        <position position="215"/>
    </location>
</feature>
<feature type="active site" description="Proton acceptor" evidence="1">
    <location>
        <position position="352"/>
    </location>
</feature>
<feature type="binding site" evidence="1">
    <location>
        <position position="163"/>
    </location>
    <ligand>
        <name>substrate</name>
    </ligand>
</feature>
<feature type="binding site" evidence="1">
    <location>
        <position position="172"/>
    </location>
    <ligand>
        <name>substrate</name>
    </ligand>
</feature>
<feature type="binding site" evidence="1">
    <location>
        <position position="250"/>
    </location>
    <ligand>
        <name>Mg(2+)</name>
        <dbReference type="ChEBI" id="CHEBI:18420"/>
    </ligand>
</feature>
<feature type="binding site" evidence="1">
    <location>
        <position position="300"/>
    </location>
    <ligand>
        <name>Mg(2+)</name>
        <dbReference type="ChEBI" id="CHEBI:18420"/>
    </ligand>
</feature>
<feature type="binding site" evidence="1">
    <location>
        <position position="300"/>
    </location>
    <ligand>
        <name>substrate</name>
    </ligand>
</feature>
<feature type="binding site" evidence="1">
    <location>
        <position position="327"/>
    </location>
    <ligand>
        <name>Mg(2+)</name>
        <dbReference type="ChEBI" id="CHEBI:18420"/>
    </ligand>
</feature>
<feature type="binding site" evidence="1">
    <location>
        <position position="327"/>
    </location>
    <ligand>
        <name>substrate</name>
    </ligand>
</feature>
<feature type="binding site" evidence="1">
    <location>
        <begin position="379"/>
        <end position="382"/>
    </location>
    <ligand>
        <name>substrate</name>
    </ligand>
</feature>
<feature type="binding site" evidence="1">
    <location>
        <position position="403"/>
    </location>
    <ligand>
        <name>substrate</name>
    </ligand>
</feature>
<feature type="sequence variant">
    <original>P</original>
    <variation>S</variation>
    <location>
        <position position="345"/>
    </location>
</feature>